<gene>
    <name type="ordered locus">VS_II0353</name>
</gene>
<reference key="1">
    <citation type="submission" date="2009-02" db="EMBL/GenBank/DDBJ databases">
        <title>Vibrio splendidus str. LGP32 complete genome.</title>
        <authorList>
            <person name="Mazel D."/>
            <person name="Le Roux F."/>
        </authorList>
    </citation>
    <scope>NUCLEOTIDE SEQUENCE [LARGE SCALE GENOMIC DNA]</scope>
    <source>
        <strain>LGP32</strain>
    </source>
</reference>
<proteinExistence type="inferred from homology"/>
<comment type="similarity">
    <text evidence="1">Belongs to the UPF0502 family.</text>
</comment>
<organism>
    <name type="scientific">Vibrio atlanticus (strain LGP32)</name>
    <name type="common">Vibrio splendidus (strain Mel32)</name>
    <dbReference type="NCBI Taxonomy" id="575788"/>
    <lineage>
        <taxon>Bacteria</taxon>
        <taxon>Pseudomonadati</taxon>
        <taxon>Pseudomonadota</taxon>
        <taxon>Gammaproteobacteria</taxon>
        <taxon>Vibrionales</taxon>
        <taxon>Vibrionaceae</taxon>
        <taxon>Vibrio</taxon>
    </lineage>
</organism>
<dbReference type="EMBL" id="FM954973">
    <property type="protein sequence ID" value="CAV25792.1"/>
    <property type="molecule type" value="Genomic_DNA"/>
</dbReference>
<dbReference type="SMR" id="B7VQW9"/>
<dbReference type="STRING" id="575788.VS_II0353"/>
<dbReference type="KEGG" id="vsp:VS_II0353"/>
<dbReference type="PATRIC" id="fig|575788.5.peg.345"/>
<dbReference type="eggNOG" id="COG3132">
    <property type="taxonomic scope" value="Bacteria"/>
</dbReference>
<dbReference type="HOGENOM" id="CLU_057831_2_0_6"/>
<dbReference type="Proteomes" id="UP000009100">
    <property type="component" value="Chromosome 2"/>
</dbReference>
<dbReference type="Gene3D" id="1.10.10.10">
    <property type="entry name" value="Winged helix-like DNA-binding domain superfamily/Winged helix DNA-binding domain"/>
    <property type="match status" value="2"/>
</dbReference>
<dbReference type="HAMAP" id="MF_01584">
    <property type="entry name" value="UPF0502"/>
    <property type="match status" value="1"/>
</dbReference>
<dbReference type="InterPro" id="IPR007432">
    <property type="entry name" value="DUF480"/>
</dbReference>
<dbReference type="InterPro" id="IPR036388">
    <property type="entry name" value="WH-like_DNA-bd_sf"/>
</dbReference>
<dbReference type="InterPro" id="IPR036390">
    <property type="entry name" value="WH_DNA-bd_sf"/>
</dbReference>
<dbReference type="PANTHER" id="PTHR38768">
    <property type="entry name" value="UPF0502 PROTEIN YCEH"/>
    <property type="match status" value="1"/>
</dbReference>
<dbReference type="PANTHER" id="PTHR38768:SF1">
    <property type="entry name" value="UPF0502 PROTEIN YCEH"/>
    <property type="match status" value="1"/>
</dbReference>
<dbReference type="Pfam" id="PF04337">
    <property type="entry name" value="DUF480"/>
    <property type="match status" value="1"/>
</dbReference>
<dbReference type="SUPFAM" id="SSF46785">
    <property type="entry name" value="Winged helix' DNA-binding domain"/>
    <property type="match status" value="2"/>
</dbReference>
<accession>B7VQW9</accession>
<feature type="chain" id="PRO_1000185669" description="UPF0502 protein VS_II0353">
    <location>
        <begin position="1"/>
        <end position="218"/>
    </location>
</feature>
<sequence length="218" mass="24080">MNTVLSPIEARIIGCLIEKEVTTPDHYPLTLNSLTTACNQKSNREPVLSLSESDVLDAVDGLIGRRMVSDESSFNSRVNKYQHRFCNTEFGDLQFTEQERAIICCMLLRGAQTPGELRTRTGRLANFSDVKEVESILEKLVAREAGALVVKLPREAGKRESRYQHLLSGEVDIEAFATASVSAVSSSASSEKFEELESEVASLREEVAELKALVESLL</sequence>
<name>Y3553_VIBA3</name>
<evidence type="ECO:0000255" key="1">
    <source>
        <dbReference type="HAMAP-Rule" id="MF_01584"/>
    </source>
</evidence>
<protein>
    <recommendedName>
        <fullName evidence="1">UPF0502 protein VS_II0353</fullName>
    </recommendedName>
</protein>